<gene>
    <name evidence="1" type="primary">DRAXIN</name>
</gene>
<organism>
    <name type="scientific">Gallus gallus</name>
    <name type="common">Chicken</name>
    <dbReference type="NCBI Taxonomy" id="9031"/>
    <lineage>
        <taxon>Eukaryota</taxon>
        <taxon>Metazoa</taxon>
        <taxon>Chordata</taxon>
        <taxon>Craniata</taxon>
        <taxon>Vertebrata</taxon>
        <taxon>Euteleostomi</taxon>
        <taxon>Archelosauria</taxon>
        <taxon>Archosauria</taxon>
        <taxon>Dinosauria</taxon>
        <taxon>Saurischia</taxon>
        <taxon>Theropoda</taxon>
        <taxon>Coelurosauria</taxon>
        <taxon>Aves</taxon>
        <taxon>Neognathae</taxon>
        <taxon>Galloanserae</taxon>
        <taxon>Galliformes</taxon>
        <taxon>Phasianidae</taxon>
        <taxon>Phasianinae</taxon>
        <taxon>Gallus</taxon>
    </lineage>
</organism>
<keyword id="KW-0217">Developmental protein</keyword>
<keyword id="KW-0325">Glycoprotein</keyword>
<keyword id="KW-1185">Reference proteome</keyword>
<keyword id="KW-0964">Secreted</keyword>
<keyword id="KW-0732">Signal</keyword>
<protein>
    <recommendedName>
        <fullName evidence="1">Draxin</fullName>
    </recommendedName>
    <alternativeName>
        <fullName evidence="1">Dorsal inhibitory axon guidance protein</fullName>
    </alternativeName>
    <alternativeName>
        <fullName evidence="1">Dorsal repulsive axon guidance protein</fullName>
    </alternativeName>
</protein>
<proteinExistence type="evidence at protein level"/>
<reference key="1">
    <citation type="journal article" date="2009" name="Science">
        <title>Draxin, a repulsive guidance protein for spinal cord and forebrain commissures.</title>
        <authorList>
            <person name="Islam S.M."/>
            <person name="Shinmyo Y."/>
            <person name="Okafuji T."/>
            <person name="Su Y."/>
            <person name="Naser I.B."/>
            <person name="Ahmed G."/>
            <person name="Zhang S."/>
            <person name="Chen S."/>
            <person name="Ohta K."/>
            <person name="Kiyonari H."/>
            <person name="Abe T."/>
            <person name="Tanaka S."/>
            <person name="Nishinakamura R."/>
            <person name="Terashima T."/>
            <person name="Kitamura T."/>
            <person name="Tanaka H."/>
        </authorList>
    </citation>
    <scope>NUCLEOTIDE SEQUENCE [MRNA]</scope>
    <scope>FUNCTION</scope>
    <scope>SUBCELLULAR LOCATION</scope>
    <scope>DEVELOPMENTAL STAGE</scope>
</reference>
<evidence type="ECO:0000255" key="1">
    <source>
        <dbReference type="HAMAP-Rule" id="MF_03060"/>
    </source>
</evidence>
<evidence type="ECO:0000256" key="2">
    <source>
        <dbReference type="SAM" id="MobiDB-lite"/>
    </source>
</evidence>
<evidence type="ECO:0000269" key="3">
    <source>
    </source>
</evidence>
<name>DRAXI_CHICK</name>
<comment type="function">
    <text evidence="1 3">Chemorepulsive axon guidance protein required for the development of spinal cord and forebrain commissures. Acts as a chemorepulsive guidance protein for commissural axons during development. Able to inhibit or repel neurite outgrowth from dorsal spinal cord and cortical explants in vitro. Binds directly to the neurites and growth cones.</text>
</comment>
<comment type="subcellular location">
    <subcellularLocation>
        <location evidence="1 3">Secreted</location>
    </subcellularLocation>
</comment>
<comment type="developmental stage">
    <text evidence="3">Expressed transiently during development of the brain and spinal cord, especially in the roof plate and the dorsal lip of the dermomyotome. Also present at the dorsolateral basement membrane of the spinal cord (at protein level).</text>
</comment>
<comment type="similarity">
    <text evidence="1">Belongs to the draxin family.</text>
</comment>
<dbReference type="EMBL" id="AB427147">
    <property type="protein sequence ID" value="BAH02787.1"/>
    <property type="molecule type" value="mRNA"/>
</dbReference>
<dbReference type="RefSeq" id="NP_001136320.1">
    <property type="nucleotide sequence ID" value="NM_001142848.2"/>
</dbReference>
<dbReference type="RefSeq" id="XP_015152402.1">
    <property type="nucleotide sequence ID" value="XM_015296916.1"/>
</dbReference>
<dbReference type="SMR" id="B6ZI38"/>
<dbReference type="FunCoup" id="B6ZI38">
    <property type="interactions" value="50"/>
</dbReference>
<dbReference type="STRING" id="9031.ENSGALP00000007370"/>
<dbReference type="GlyCosmos" id="B6ZI38">
    <property type="glycosylation" value="1 site, No reported glycans"/>
</dbReference>
<dbReference type="GlyGen" id="B6ZI38">
    <property type="glycosylation" value="2 sites"/>
</dbReference>
<dbReference type="PaxDb" id="9031-ENSGALP00000007370"/>
<dbReference type="GeneID" id="419492"/>
<dbReference type="KEGG" id="gga:419492"/>
<dbReference type="CTD" id="374946"/>
<dbReference type="VEuPathDB" id="HostDB:geneid_419492"/>
<dbReference type="eggNOG" id="ENOG502QUE0">
    <property type="taxonomic scope" value="Eukaryota"/>
</dbReference>
<dbReference type="HOGENOM" id="CLU_063473_0_0_1"/>
<dbReference type="InParanoid" id="B6ZI38"/>
<dbReference type="OrthoDB" id="9931375at2759"/>
<dbReference type="PhylomeDB" id="B6ZI38"/>
<dbReference type="PRO" id="PR:B6ZI38"/>
<dbReference type="Proteomes" id="UP000000539">
    <property type="component" value="Chromosome 21"/>
</dbReference>
<dbReference type="Bgee" id="ENSGALG00000004631">
    <property type="expression patterns" value="Expressed in brain and 10 other cell types or tissues"/>
</dbReference>
<dbReference type="GO" id="GO:0005576">
    <property type="term" value="C:extracellular region"/>
    <property type="evidence" value="ECO:0000314"/>
    <property type="project" value="UniProtKB"/>
</dbReference>
<dbReference type="GO" id="GO:0007411">
    <property type="term" value="P:axon guidance"/>
    <property type="evidence" value="ECO:0000314"/>
    <property type="project" value="UniProtKB"/>
</dbReference>
<dbReference type="GO" id="GO:0021528">
    <property type="term" value="P:commissural neuron differentiation in spinal cord"/>
    <property type="evidence" value="ECO:0000314"/>
    <property type="project" value="UniProtKB"/>
</dbReference>
<dbReference type="GO" id="GO:0021516">
    <property type="term" value="P:dorsal spinal cord development"/>
    <property type="evidence" value="ECO:0000314"/>
    <property type="project" value="UniProtKB"/>
</dbReference>
<dbReference type="GO" id="GO:0030900">
    <property type="term" value="P:forebrain development"/>
    <property type="evidence" value="ECO:0000314"/>
    <property type="project" value="UniProtKB"/>
</dbReference>
<dbReference type="GO" id="GO:0090090">
    <property type="term" value="P:negative regulation of canonical Wnt signaling pathway"/>
    <property type="evidence" value="ECO:0000318"/>
    <property type="project" value="GO_Central"/>
</dbReference>
<dbReference type="GO" id="GO:0016055">
    <property type="term" value="P:Wnt signaling pathway"/>
    <property type="evidence" value="ECO:0007669"/>
    <property type="project" value="InterPro"/>
</dbReference>
<dbReference type="HAMAP" id="MF_03060">
    <property type="entry name" value="Draxin"/>
    <property type="match status" value="1"/>
</dbReference>
<dbReference type="InterPro" id="IPR029094">
    <property type="entry name" value="Draxin"/>
</dbReference>
<dbReference type="PANTHER" id="PTHR28610">
    <property type="entry name" value="DRAXIN"/>
    <property type="match status" value="1"/>
</dbReference>
<dbReference type="PANTHER" id="PTHR28610:SF1">
    <property type="entry name" value="DRAXIN"/>
    <property type="match status" value="1"/>
</dbReference>
<dbReference type="Pfam" id="PF15550">
    <property type="entry name" value="Draxin"/>
    <property type="match status" value="1"/>
</dbReference>
<sequence length="349" mass="39119">MAASSTFFSPSLFLCVLVLIDITLAVSLDTDMKLKSENNNHLQNQETWPQQPRSGHHHKHGLAKKGRVLALPVRGQPAGEEALRVGSGAPAMEELVPLGQPAALKQDKDKDVFLGFELPHAERENQSPGSERGKKQNREQRRHSRRDRLKHHRGKTAVGPSSLYKKPESFEQQFQNLQAEEATSPTPTVLPFTALDLVVSTEEPPVLPATSPRSQARLRQDGDVMPTLDMALFDWTDYEDLKPEMWPSAKKKEKRRSKSSNGGNETSSAEGEPCDHHLDCLPGSCCDLREHLCKPHNRGLNNKCYDDCMCTEGLRCYAKFHRNRRVTRRKGRCVEPESANGEQGSFINV</sequence>
<accession>B6ZI38</accession>
<feature type="signal peptide" evidence="1">
    <location>
        <begin position="1"/>
        <end position="25"/>
    </location>
</feature>
<feature type="chain" id="PRO_0000365948" description="Draxin">
    <location>
        <begin position="26"/>
        <end position="349"/>
    </location>
</feature>
<feature type="region of interest" description="Disordered" evidence="2">
    <location>
        <begin position="40"/>
        <end position="63"/>
    </location>
</feature>
<feature type="region of interest" description="Disordered" evidence="2">
    <location>
        <begin position="119"/>
        <end position="166"/>
    </location>
</feature>
<feature type="region of interest" description="Disordered" evidence="2">
    <location>
        <begin position="246"/>
        <end position="273"/>
    </location>
</feature>
<feature type="compositionally biased region" description="Polar residues" evidence="2">
    <location>
        <begin position="40"/>
        <end position="53"/>
    </location>
</feature>
<feature type="compositionally biased region" description="Basic residues" evidence="2">
    <location>
        <begin position="54"/>
        <end position="63"/>
    </location>
</feature>
<feature type="compositionally biased region" description="Basic and acidic residues" evidence="2">
    <location>
        <begin position="119"/>
        <end position="139"/>
    </location>
</feature>
<feature type="compositionally biased region" description="Basic residues" evidence="2">
    <location>
        <begin position="140"/>
        <end position="155"/>
    </location>
</feature>
<feature type="compositionally biased region" description="Basic residues" evidence="2">
    <location>
        <begin position="249"/>
        <end position="258"/>
    </location>
</feature>
<feature type="glycosylation site" description="N-linked (GlcNAc...) asparagine" evidence="1">
    <location>
        <position position="264"/>
    </location>
</feature>